<keyword id="KW-0027">Amidation</keyword>
<keyword id="KW-0044">Antibiotic</keyword>
<keyword id="KW-0929">Antimicrobial</keyword>
<keyword id="KW-0391">Immunity</keyword>
<keyword id="KW-0399">Innate immunity</keyword>
<keyword id="KW-1185">Reference proteome</keyword>
<keyword id="KW-0964">Secreted</keyword>
<keyword id="KW-0732">Signal</keyword>
<proteinExistence type="evidence at transcript level"/>
<evidence type="ECO:0000250" key="1">
    <source>
        <dbReference type="UniProtKB" id="P08375"/>
    </source>
</evidence>
<evidence type="ECO:0000255" key="2"/>
<evidence type="ECO:0000269" key="3">
    <source>
    </source>
</evidence>
<evidence type="ECO:0000269" key="4">
    <source>
    </source>
</evidence>
<evidence type="ECO:0000269" key="5">
    <source>
    </source>
</evidence>
<evidence type="ECO:0000269" key="6">
    <source>
    </source>
</evidence>
<evidence type="ECO:0000269" key="7">
    <source>
    </source>
</evidence>
<evidence type="ECO:0000303" key="8">
    <source>
    </source>
</evidence>
<evidence type="ECO:0000305" key="9"/>
<evidence type="ECO:0000312" key="10">
    <source>
        <dbReference type="FlyBase" id="FBgn0000277"/>
    </source>
</evidence>
<organism>
    <name type="scientific">Drosophila melanogaster</name>
    <name type="common">Fruit fly</name>
    <dbReference type="NCBI Taxonomy" id="7227"/>
    <lineage>
        <taxon>Eukaryota</taxon>
        <taxon>Metazoa</taxon>
        <taxon>Ecdysozoa</taxon>
        <taxon>Arthropoda</taxon>
        <taxon>Hexapoda</taxon>
        <taxon>Insecta</taxon>
        <taxon>Pterygota</taxon>
        <taxon>Neoptera</taxon>
        <taxon>Endopterygota</taxon>
        <taxon>Diptera</taxon>
        <taxon>Brachycera</taxon>
        <taxon>Muscomorpha</taxon>
        <taxon>Ephydroidea</taxon>
        <taxon>Drosophilidae</taxon>
        <taxon>Drosophila</taxon>
        <taxon>Sophophora</taxon>
    </lineage>
</organism>
<comment type="function">
    <text evidence="4">Cecropins have lytic and antibacterial activity against several Gram-positive and Gram-negative bacteria.</text>
</comment>
<comment type="subcellular location">
    <subcellularLocation>
        <location>Secreted</location>
    </subcellularLocation>
</comment>
<comment type="tissue specificity">
    <text evidence="4">Strongly expressed in larval, pupal and adult fat body and hemocytes after injection of bacteria. Maximal expression in the adult involves fat body cells of the head, thorax and abdomen.</text>
</comment>
<comment type="induction">
    <text evidence="3 4">Induced as part of the humoral response to a bacterial invasion (PubMed:2390977). Transcripts appear within one hour after injection of bacteria into the hemocoel, reach a maximum after 2-6 hours and have almost disappeared after 24 hours (PubMed:2104802). Similar response is seen when flies ingest bacteria present in their food (PubMed:2104802).</text>
</comment>
<comment type="similarity">
    <text evidence="9">Belongs to the cecropin family.</text>
</comment>
<comment type="sequence caution" evidence="9">
    <conflict type="frameshift">
        <sequence resource="EMBL-CDS" id="ACD81810"/>
    </conflict>
</comment>
<reference key="1">
    <citation type="journal article" date="1990" name="EMBO J.">
        <title>The cecropin locus in Drosophila; a compact gene cluster involved in the response to infection.</title>
        <authorList>
            <person name="Kylsten P."/>
            <person name="Samakovlis C."/>
            <person name="Hultmark D."/>
        </authorList>
    </citation>
    <scope>NUCLEOTIDE SEQUENCE [GENOMIC DNA]</scope>
    <scope>INDUCTION</scope>
    <source>
        <strain>Canton-S</strain>
    </source>
</reference>
<reference key="2">
    <citation type="journal article" date="1997" name="Genetics">
        <title>Molecular population genetics of Drosophila immune system genes.</title>
        <authorList>
            <person name="Clark A.G."/>
            <person name="Wang L."/>
        </authorList>
    </citation>
    <scope>NUCLEOTIDE SEQUENCE [GENOMIC DNA]</scope>
    <scope>VARIANTS LYS-2; LEU-7; GLY-8 AND THR-11</scope>
    <source>
        <strain>B115</strain>
        <strain>B141</strain>
        <strain>B208</strain>
        <strain>B225</strain>
        <strain>B226</strain>
        <strain>M13</strain>
        <strain>Z10</strain>
        <strain>Z22</strain>
        <strain>Z24</strain>
        <strain>Z5</strain>
    </source>
</reference>
<reference key="3">
    <citation type="journal article" date="1998" name="Immunogenetics">
        <title>Evolutionary history and mechanism of the Drosophila cecropin gene family.</title>
        <authorList>
            <person name="Date A."/>
            <person name="Satta Y."/>
            <person name="Takahata N."/>
            <person name="Chigusa S.I."/>
        </authorList>
    </citation>
    <scope>NUCLEOTIDE SEQUENCE [GENOMIC DNA]</scope>
    <scope>VARIANTS LEU-3 AND ALA-36</scope>
    <source>
        <strain>3RC</strain>
        <strain>MA1</strain>
        <strain>MA2</strain>
        <strain>MA3</strain>
        <strain>MJ1</strain>
        <strain>MJ2</strain>
        <strain>MJ3</strain>
    </source>
</reference>
<reference key="4">
    <citation type="journal article" date="1998" name="Genetics">
        <title>Molecular evolution of the Cecropin multigene family in Drosophila: functional genes vs pseudogenes.</title>
        <authorList>
            <person name="Ramos-Onsins S."/>
            <person name="Aguade M."/>
        </authorList>
    </citation>
    <scope>NUCLEOTIDE SEQUENCE [GENOMIC DNA]</scope>
    <scope>VARIANTS LEU-3 AND THR-11</scope>
    <source>
        <strain>M11</strain>
        <strain>M2</strain>
        <strain>M26</strain>
        <strain>M36</strain>
        <strain>M40</strain>
        <strain>M47</strain>
        <strain>M54</strain>
        <strain>M55</strain>
        <strain>M66</strain>
    </source>
</reference>
<reference key="5">
    <citation type="journal article" date="2000" name="Science">
        <title>The genome sequence of Drosophila melanogaster.</title>
        <authorList>
            <person name="Adams M.D."/>
            <person name="Celniker S.E."/>
            <person name="Holt R.A."/>
            <person name="Evans C.A."/>
            <person name="Gocayne J.D."/>
            <person name="Amanatides P.G."/>
            <person name="Scherer S.E."/>
            <person name="Li P.W."/>
            <person name="Hoskins R.A."/>
            <person name="Galle R.F."/>
            <person name="George R.A."/>
            <person name="Lewis S.E."/>
            <person name="Richards S."/>
            <person name="Ashburner M."/>
            <person name="Henderson S.N."/>
            <person name="Sutton G.G."/>
            <person name="Wortman J.R."/>
            <person name="Yandell M.D."/>
            <person name="Zhang Q."/>
            <person name="Chen L.X."/>
            <person name="Brandon R.C."/>
            <person name="Rogers Y.-H.C."/>
            <person name="Blazej R.G."/>
            <person name="Champe M."/>
            <person name="Pfeiffer B.D."/>
            <person name="Wan K.H."/>
            <person name="Doyle C."/>
            <person name="Baxter E.G."/>
            <person name="Helt G."/>
            <person name="Nelson C.R."/>
            <person name="Miklos G.L.G."/>
            <person name="Abril J.F."/>
            <person name="Agbayani A."/>
            <person name="An H.-J."/>
            <person name="Andrews-Pfannkoch C."/>
            <person name="Baldwin D."/>
            <person name="Ballew R.M."/>
            <person name="Basu A."/>
            <person name="Baxendale J."/>
            <person name="Bayraktaroglu L."/>
            <person name="Beasley E.M."/>
            <person name="Beeson K.Y."/>
            <person name="Benos P.V."/>
            <person name="Berman B.P."/>
            <person name="Bhandari D."/>
            <person name="Bolshakov S."/>
            <person name="Borkova D."/>
            <person name="Botchan M.R."/>
            <person name="Bouck J."/>
            <person name="Brokstein P."/>
            <person name="Brottier P."/>
            <person name="Burtis K.C."/>
            <person name="Busam D.A."/>
            <person name="Butler H."/>
            <person name="Cadieu E."/>
            <person name="Center A."/>
            <person name="Chandra I."/>
            <person name="Cherry J.M."/>
            <person name="Cawley S."/>
            <person name="Dahlke C."/>
            <person name="Davenport L.B."/>
            <person name="Davies P."/>
            <person name="de Pablos B."/>
            <person name="Delcher A."/>
            <person name="Deng Z."/>
            <person name="Mays A.D."/>
            <person name="Dew I."/>
            <person name="Dietz S.M."/>
            <person name="Dodson K."/>
            <person name="Doup L.E."/>
            <person name="Downes M."/>
            <person name="Dugan-Rocha S."/>
            <person name="Dunkov B.C."/>
            <person name="Dunn P."/>
            <person name="Durbin K.J."/>
            <person name="Evangelista C.C."/>
            <person name="Ferraz C."/>
            <person name="Ferriera S."/>
            <person name="Fleischmann W."/>
            <person name="Fosler C."/>
            <person name="Gabrielian A.E."/>
            <person name="Garg N.S."/>
            <person name="Gelbart W.M."/>
            <person name="Glasser K."/>
            <person name="Glodek A."/>
            <person name="Gong F."/>
            <person name="Gorrell J.H."/>
            <person name="Gu Z."/>
            <person name="Guan P."/>
            <person name="Harris M."/>
            <person name="Harris N.L."/>
            <person name="Harvey D.A."/>
            <person name="Heiman T.J."/>
            <person name="Hernandez J.R."/>
            <person name="Houck J."/>
            <person name="Hostin D."/>
            <person name="Houston K.A."/>
            <person name="Howland T.J."/>
            <person name="Wei M.-H."/>
            <person name="Ibegwam C."/>
            <person name="Jalali M."/>
            <person name="Kalush F."/>
            <person name="Karpen G.H."/>
            <person name="Ke Z."/>
            <person name="Kennison J.A."/>
            <person name="Ketchum K.A."/>
            <person name="Kimmel B.E."/>
            <person name="Kodira C.D."/>
            <person name="Kraft C.L."/>
            <person name="Kravitz S."/>
            <person name="Kulp D."/>
            <person name="Lai Z."/>
            <person name="Lasko P."/>
            <person name="Lei Y."/>
            <person name="Levitsky A.A."/>
            <person name="Li J.H."/>
            <person name="Li Z."/>
            <person name="Liang Y."/>
            <person name="Lin X."/>
            <person name="Liu X."/>
            <person name="Mattei B."/>
            <person name="McIntosh T.C."/>
            <person name="McLeod M.P."/>
            <person name="McPherson D."/>
            <person name="Merkulov G."/>
            <person name="Milshina N.V."/>
            <person name="Mobarry C."/>
            <person name="Morris J."/>
            <person name="Moshrefi A."/>
            <person name="Mount S.M."/>
            <person name="Moy M."/>
            <person name="Murphy B."/>
            <person name="Murphy L."/>
            <person name="Muzny D.M."/>
            <person name="Nelson D.L."/>
            <person name="Nelson D.R."/>
            <person name="Nelson K.A."/>
            <person name="Nixon K."/>
            <person name="Nusskern D.R."/>
            <person name="Pacleb J.M."/>
            <person name="Palazzolo M."/>
            <person name="Pittman G.S."/>
            <person name="Pan S."/>
            <person name="Pollard J."/>
            <person name="Puri V."/>
            <person name="Reese M.G."/>
            <person name="Reinert K."/>
            <person name="Remington K."/>
            <person name="Saunders R.D.C."/>
            <person name="Scheeler F."/>
            <person name="Shen H."/>
            <person name="Shue B.C."/>
            <person name="Siden-Kiamos I."/>
            <person name="Simpson M."/>
            <person name="Skupski M.P."/>
            <person name="Smith T.J."/>
            <person name="Spier E."/>
            <person name="Spradling A.C."/>
            <person name="Stapleton M."/>
            <person name="Strong R."/>
            <person name="Sun E."/>
            <person name="Svirskas R."/>
            <person name="Tector C."/>
            <person name="Turner R."/>
            <person name="Venter E."/>
            <person name="Wang A.H."/>
            <person name="Wang X."/>
            <person name="Wang Z.-Y."/>
            <person name="Wassarman D.A."/>
            <person name="Weinstock G.M."/>
            <person name="Weissenbach J."/>
            <person name="Williams S.M."/>
            <person name="Woodage T."/>
            <person name="Worley K.C."/>
            <person name="Wu D."/>
            <person name="Yang S."/>
            <person name="Yao Q.A."/>
            <person name="Ye J."/>
            <person name="Yeh R.-F."/>
            <person name="Zaveri J.S."/>
            <person name="Zhan M."/>
            <person name="Zhang G."/>
            <person name="Zhao Q."/>
            <person name="Zheng L."/>
            <person name="Zheng X.H."/>
            <person name="Zhong F.N."/>
            <person name="Zhong W."/>
            <person name="Zhou X."/>
            <person name="Zhu S.C."/>
            <person name="Zhu X."/>
            <person name="Smith H.O."/>
            <person name="Gibbs R.A."/>
            <person name="Myers E.W."/>
            <person name="Rubin G.M."/>
            <person name="Venter J.C."/>
        </authorList>
    </citation>
    <scope>NUCLEOTIDE SEQUENCE [LARGE SCALE GENOMIC DNA]</scope>
    <source>
        <strain>Berkeley</strain>
    </source>
</reference>
<reference key="6">
    <citation type="journal article" date="2002" name="Genome Biol.">
        <title>Annotation of the Drosophila melanogaster euchromatic genome: a systematic review.</title>
        <authorList>
            <person name="Misra S."/>
            <person name="Crosby M.A."/>
            <person name="Mungall C.J."/>
            <person name="Matthews B.B."/>
            <person name="Campbell K.S."/>
            <person name="Hradecky P."/>
            <person name="Huang Y."/>
            <person name="Kaminker J.S."/>
            <person name="Millburn G.H."/>
            <person name="Prochnik S.E."/>
            <person name="Smith C.D."/>
            <person name="Tupy J.L."/>
            <person name="Whitfield E.J."/>
            <person name="Bayraktaroglu L."/>
            <person name="Berman B.P."/>
            <person name="Bettencourt B.R."/>
            <person name="Celniker S.E."/>
            <person name="de Grey A.D.N.J."/>
            <person name="Drysdale R.A."/>
            <person name="Harris N.L."/>
            <person name="Richter J."/>
            <person name="Russo S."/>
            <person name="Schroeder A.J."/>
            <person name="Shu S.Q."/>
            <person name="Stapleton M."/>
            <person name="Yamada C."/>
            <person name="Ashburner M."/>
            <person name="Gelbart W.M."/>
            <person name="Rubin G.M."/>
            <person name="Lewis S.E."/>
        </authorList>
    </citation>
    <scope>GENOME REANNOTATION</scope>
    <source>
        <strain>Berkeley</strain>
    </source>
</reference>
<reference key="7">
    <citation type="submission" date="2008-05" db="EMBL/GenBank/DDBJ databases">
        <authorList>
            <person name="Carlson J.W."/>
            <person name="Booth B."/>
            <person name="Frise E."/>
            <person name="Park S."/>
            <person name="Wan K.H."/>
            <person name="Yu C."/>
            <person name="Celniker S.E."/>
        </authorList>
    </citation>
    <scope>NUCLEOTIDE SEQUENCE [LARGE SCALE MRNA]</scope>
    <source>
        <strain>Berkeley</strain>
    </source>
</reference>
<reference key="8">
    <citation type="journal article" date="1990" name="EMBO J.">
        <title>The immune response in Drosophila: pattern of cecropin expression and biological activity.</title>
        <authorList>
            <person name="Samakovlis C."/>
            <person name="Kimbrell D.A."/>
            <person name="Kylsten P."/>
            <person name="Engstrom A."/>
            <person name="Hultmark D."/>
        </authorList>
    </citation>
    <scope>FUNCTION</scope>
    <scope>INDUCTION</scope>
    <scope>TISSUE SPECIFICITY</scope>
    <source>
        <strain>Canton-S</strain>
    </source>
</reference>
<dbReference type="EMBL" id="X16972">
    <property type="protein sequence ID" value="CAA34844.1"/>
    <property type="molecule type" value="Genomic_DNA"/>
</dbReference>
<dbReference type="EMBL" id="AF018976">
    <property type="protein sequence ID" value="AAB82473.1"/>
    <property type="molecule type" value="Genomic_DNA"/>
</dbReference>
<dbReference type="EMBL" id="AF018977">
    <property type="protein sequence ID" value="AAB82474.1"/>
    <property type="molecule type" value="Genomic_DNA"/>
</dbReference>
<dbReference type="EMBL" id="AF018978">
    <property type="protein sequence ID" value="AAB82475.1"/>
    <property type="molecule type" value="Genomic_DNA"/>
</dbReference>
<dbReference type="EMBL" id="AF018979">
    <property type="protein sequence ID" value="AAB82476.1"/>
    <property type="molecule type" value="Genomic_DNA"/>
</dbReference>
<dbReference type="EMBL" id="AF018980">
    <property type="protein sequence ID" value="AAB82477.1"/>
    <property type="molecule type" value="Genomic_DNA"/>
</dbReference>
<dbReference type="EMBL" id="AF018981">
    <property type="protein sequence ID" value="AAB82478.1"/>
    <property type="molecule type" value="Genomic_DNA"/>
</dbReference>
<dbReference type="EMBL" id="AF018982">
    <property type="protein sequence ID" value="AAB82479.1"/>
    <property type="molecule type" value="Genomic_DNA"/>
</dbReference>
<dbReference type="EMBL" id="AF018983">
    <property type="protein sequence ID" value="AAB82480.1"/>
    <property type="molecule type" value="Genomic_DNA"/>
</dbReference>
<dbReference type="EMBL" id="AF018984">
    <property type="protein sequence ID" value="AAB82481.1"/>
    <property type="molecule type" value="Genomic_DNA"/>
</dbReference>
<dbReference type="EMBL" id="AB010791">
    <property type="protein sequence ID" value="BAA28721.1"/>
    <property type="molecule type" value="Genomic_DNA"/>
</dbReference>
<dbReference type="EMBL" id="AB010792">
    <property type="protein sequence ID" value="BAA28725.1"/>
    <property type="molecule type" value="Genomic_DNA"/>
</dbReference>
<dbReference type="EMBL" id="AB010793">
    <property type="protein sequence ID" value="BAA28728.1"/>
    <property type="molecule type" value="Genomic_DNA"/>
</dbReference>
<dbReference type="EMBL" id="AB010794">
    <property type="protein sequence ID" value="BAA28732.1"/>
    <property type="molecule type" value="Genomic_DNA"/>
</dbReference>
<dbReference type="EMBL" id="AB010795">
    <property type="protein sequence ID" value="BAA28734.1"/>
    <property type="molecule type" value="Genomic_DNA"/>
</dbReference>
<dbReference type="EMBL" id="AB010796">
    <property type="protein sequence ID" value="BAA28738.1"/>
    <property type="molecule type" value="Genomic_DNA"/>
</dbReference>
<dbReference type="EMBL" id="AB010797">
    <property type="protein sequence ID" value="BAA28742.1"/>
    <property type="molecule type" value="Genomic_DNA"/>
</dbReference>
<dbReference type="EMBL" id="Y16852">
    <property type="protein sequence ID" value="CAA76427.1"/>
    <property type="molecule type" value="Genomic_DNA"/>
</dbReference>
<dbReference type="EMBL" id="Y16853">
    <property type="protein sequence ID" value="CAA76433.1"/>
    <property type="molecule type" value="Genomic_DNA"/>
</dbReference>
<dbReference type="EMBL" id="Y16855">
    <property type="protein sequence ID" value="CAA76445.1"/>
    <property type="molecule type" value="Genomic_DNA"/>
</dbReference>
<dbReference type="EMBL" id="Y16857">
    <property type="protein sequence ID" value="CAA76457.1"/>
    <property type="molecule type" value="Genomic_DNA"/>
</dbReference>
<dbReference type="EMBL" id="Y16858">
    <property type="protein sequence ID" value="CAA76463.1"/>
    <property type="molecule type" value="Genomic_DNA"/>
</dbReference>
<dbReference type="EMBL" id="Y16859">
    <property type="protein sequence ID" value="CAA76469.1"/>
    <property type="molecule type" value="Genomic_DNA"/>
</dbReference>
<dbReference type="EMBL" id="Y16861">
    <property type="protein sequence ID" value="CAA76479.1"/>
    <property type="molecule type" value="Genomic_DNA"/>
</dbReference>
<dbReference type="EMBL" id="AE014297">
    <property type="protein sequence ID" value="AAF57026.1"/>
    <property type="molecule type" value="Genomic_DNA"/>
</dbReference>
<dbReference type="EMBL" id="BT032790">
    <property type="protein sequence ID" value="ACD81804.1"/>
    <property type="molecule type" value="mRNA"/>
</dbReference>
<dbReference type="EMBL" id="BT032796">
    <property type="protein sequence ID" value="ACD81810.1"/>
    <property type="status" value="ALT_FRAME"/>
    <property type="molecule type" value="mRNA"/>
</dbReference>
<dbReference type="PIR" id="S07664">
    <property type="entry name" value="S07664"/>
</dbReference>
<dbReference type="RefSeq" id="NP_524589.1">
    <property type="nucleotide sequence ID" value="NM_079850.4"/>
</dbReference>
<dbReference type="SMR" id="C0HKQ8"/>
<dbReference type="FunCoup" id="C0HKQ8">
    <property type="interactions" value="88"/>
</dbReference>
<dbReference type="IntAct" id="C0HKQ8">
    <property type="interactions" value="18"/>
</dbReference>
<dbReference type="MINT" id="C0HKQ8"/>
<dbReference type="DNASU" id="43597"/>
<dbReference type="EnsemblMetazoa" id="FBtr0085612">
    <property type="protein sequence ID" value="FBpp0084977"/>
    <property type="gene ID" value="FBgn0000276"/>
</dbReference>
<dbReference type="EnsemblMetazoa" id="FBtr0085614">
    <property type="protein sequence ID" value="FBpp0084978"/>
    <property type="gene ID" value="FBgn0000277"/>
</dbReference>
<dbReference type="GeneID" id="43596"/>
<dbReference type="GeneID" id="43597"/>
<dbReference type="KEGG" id="dme:Dmel_CG1365"/>
<dbReference type="KEGG" id="dme:Dmel_CG1367"/>
<dbReference type="AGR" id="FB:FBgn0000277"/>
<dbReference type="CTD" id="43596"/>
<dbReference type="CTD" id="43597"/>
<dbReference type="FlyBase" id="FBgn0000277">
    <property type="gene designation" value="CecA2"/>
</dbReference>
<dbReference type="VEuPathDB" id="VectorBase:FBgn0000276"/>
<dbReference type="VEuPathDB" id="VectorBase:FBgn0000277"/>
<dbReference type="InParanoid" id="C0HKQ8"/>
<dbReference type="OMA" id="NRIFVFV"/>
<dbReference type="OrthoDB" id="7410372at2759"/>
<dbReference type="PRO" id="PR:C0HKQ8"/>
<dbReference type="Proteomes" id="UP000000803">
    <property type="component" value="Chromosome 3R"/>
</dbReference>
<dbReference type="Bgee" id="FBgn0000276">
    <property type="expression patterns" value="Expressed in epithelial cell in male reproductive gland and 33 other cell types or tissues"/>
</dbReference>
<dbReference type="ExpressionAtlas" id="C0HKQ8">
    <property type="expression patterns" value="baseline and differential"/>
</dbReference>
<dbReference type="GO" id="GO:0005576">
    <property type="term" value="C:extracellular region"/>
    <property type="evidence" value="ECO:0000314"/>
    <property type="project" value="UniProtKB"/>
</dbReference>
<dbReference type="GO" id="GO:0005615">
    <property type="term" value="C:extracellular space"/>
    <property type="evidence" value="ECO:0000314"/>
    <property type="project" value="FlyBase"/>
</dbReference>
<dbReference type="GO" id="GO:0019731">
    <property type="term" value="P:antibacterial humoral response"/>
    <property type="evidence" value="ECO:0000270"/>
    <property type="project" value="FlyBase"/>
</dbReference>
<dbReference type="GO" id="GO:0050829">
    <property type="term" value="P:defense response to Gram-negative bacterium"/>
    <property type="evidence" value="ECO:0000314"/>
    <property type="project" value="FlyBase"/>
</dbReference>
<dbReference type="GO" id="GO:0050830">
    <property type="term" value="P:defense response to Gram-positive bacterium"/>
    <property type="evidence" value="ECO:0000314"/>
    <property type="project" value="FlyBase"/>
</dbReference>
<dbReference type="GO" id="GO:0002213">
    <property type="term" value="P:defense response to insect"/>
    <property type="evidence" value="ECO:0000270"/>
    <property type="project" value="FlyBase"/>
</dbReference>
<dbReference type="GO" id="GO:0051607">
    <property type="term" value="P:defense response to virus"/>
    <property type="evidence" value="ECO:0000316"/>
    <property type="project" value="FlyBase"/>
</dbReference>
<dbReference type="GO" id="GO:0006959">
    <property type="term" value="P:humoral immune response"/>
    <property type="evidence" value="ECO:0000270"/>
    <property type="project" value="FlyBase"/>
</dbReference>
<dbReference type="GO" id="GO:0045087">
    <property type="term" value="P:innate immune response"/>
    <property type="evidence" value="ECO:0007669"/>
    <property type="project" value="UniProtKB-KW"/>
</dbReference>
<dbReference type="GO" id="GO:0140460">
    <property type="term" value="P:response to Gram-negative bacterium"/>
    <property type="evidence" value="ECO:0000316"/>
    <property type="project" value="FlyBase"/>
</dbReference>
<dbReference type="InterPro" id="IPR000875">
    <property type="entry name" value="Cecropin"/>
</dbReference>
<dbReference type="InterPro" id="IPR020400">
    <property type="entry name" value="Cecropin_insect"/>
</dbReference>
<dbReference type="PANTHER" id="PTHR38329">
    <property type="entry name" value="CECROPIN-A1-RELATED"/>
    <property type="match status" value="1"/>
</dbReference>
<dbReference type="PANTHER" id="PTHR38329:SF1">
    <property type="entry name" value="CECROPIN-A1-RELATED"/>
    <property type="match status" value="1"/>
</dbReference>
<dbReference type="Pfam" id="PF00272">
    <property type="entry name" value="Cecropin"/>
    <property type="match status" value="1"/>
</dbReference>
<dbReference type="PROSITE" id="PS00268">
    <property type="entry name" value="CECROPIN"/>
    <property type="match status" value="1"/>
</dbReference>
<gene>
    <name evidence="8 10" type="primary">CecA2</name>
    <name evidence="10" type="ORF">CG1367</name>
</gene>
<accession>C0HKQ8</accession>
<accession>B3DN02</accession>
<accession>B3DN08</accession>
<accession>O16815</accession>
<accession>O16816</accession>
<accession>O16817</accession>
<accession>O16818</accession>
<accession>O16819</accession>
<accession>O16820</accession>
<accession>O16821</accession>
<accession>O61275</accession>
<accession>O61276</accession>
<accession>O61277</accession>
<accession>O61279</accession>
<accession>O62590</accession>
<accession>P14954</accession>
<accession>P82449</accession>
<sequence>MNFYNIFVFVALILAITIGQSEAGWLKKIGKKIERVGQHTRDATIQGLGIAQQAANVAATARG</sequence>
<protein>
    <recommendedName>
        <fullName evidence="8">Cecropin-A2</fullName>
    </recommendedName>
</protein>
<name>CECA2_DROME</name>
<feature type="signal peptide" evidence="2">
    <location>
        <begin position="1"/>
        <end position="23"/>
    </location>
</feature>
<feature type="chain" id="PRO_0000441213" description="Cecropin-A2">
    <location>
        <begin position="24"/>
        <end position="62"/>
    </location>
</feature>
<feature type="modified residue" description="Arginine amide" evidence="1">
    <location>
        <position position="62"/>
    </location>
</feature>
<feature type="sequence variant" description="In strain: Z5." evidence="5">
    <original>N</original>
    <variation>D</variation>
    <location>
        <position position="2"/>
    </location>
</feature>
<feature type="sequence variant" description="In strain: Z24." evidence="5">
    <original>N</original>
    <variation>K</variation>
    <location>
        <position position="2"/>
    </location>
</feature>
<feature type="sequence variant" description="In strain: M2, MJ1 and MJ3." evidence="6 7">
    <original>F</original>
    <variation>L</variation>
    <location>
        <position position="3"/>
    </location>
</feature>
<feature type="sequence variant" description="In strain: B226." evidence="5">
    <original>F</original>
    <variation>L</variation>
    <location>
        <position position="7"/>
    </location>
</feature>
<feature type="sequence variant" description="In strain: Z5." evidence="5 7">
    <original>V</original>
    <variation>G</variation>
    <location>
        <position position="8"/>
    </location>
</feature>
<feature type="sequence variant" description="In strain: B115, M11 and M47." evidence="5 7">
    <original>A</original>
    <variation>T</variation>
    <location>
        <position position="11"/>
    </location>
</feature>
<feature type="sequence variant" description="In strain: MJ2." evidence="6">
    <original>V</original>
    <variation>A</variation>
    <location>
        <position position="36"/>
    </location>
</feature>
<feature type="sequence conflict" description="In Ref. 7; ACD81810." evidence="9" ref="7">
    <original>K</original>
    <variation>R</variation>
    <location>
        <position position="31"/>
    </location>
</feature>